<organism>
    <name type="scientific">Sinorhizobium medicae (strain WSM419)</name>
    <name type="common">Ensifer medicae</name>
    <dbReference type="NCBI Taxonomy" id="366394"/>
    <lineage>
        <taxon>Bacteria</taxon>
        <taxon>Pseudomonadati</taxon>
        <taxon>Pseudomonadota</taxon>
        <taxon>Alphaproteobacteria</taxon>
        <taxon>Hyphomicrobiales</taxon>
        <taxon>Rhizobiaceae</taxon>
        <taxon>Sinorhizobium/Ensifer group</taxon>
        <taxon>Sinorhizobium</taxon>
    </lineage>
</organism>
<evidence type="ECO:0000255" key="1">
    <source>
        <dbReference type="HAMAP-Rule" id="MF_00811"/>
    </source>
</evidence>
<dbReference type="EC" id="2.3.1.117" evidence="1"/>
<dbReference type="EMBL" id="CP000738">
    <property type="protein sequence ID" value="ABR58929.1"/>
    <property type="molecule type" value="Genomic_DNA"/>
</dbReference>
<dbReference type="RefSeq" id="WP_011974283.1">
    <property type="nucleotide sequence ID" value="NC_009636.1"/>
</dbReference>
<dbReference type="RefSeq" id="YP_001325764.1">
    <property type="nucleotide sequence ID" value="NC_009636.1"/>
</dbReference>
<dbReference type="SMR" id="A6U5J9"/>
<dbReference type="STRING" id="366394.Smed_0069"/>
<dbReference type="KEGG" id="smd:Smed_0069"/>
<dbReference type="PATRIC" id="fig|366394.8.peg.3124"/>
<dbReference type="eggNOG" id="COG2171">
    <property type="taxonomic scope" value="Bacteria"/>
</dbReference>
<dbReference type="HOGENOM" id="CLU_050859_0_1_5"/>
<dbReference type="OrthoDB" id="9775362at2"/>
<dbReference type="UniPathway" id="UPA00034">
    <property type="reaction ID" value="UER00019"/>
</dbReference>
<dbReference type="Proteomes" id="UP000001108">
    <property type="component" value="Chromosome"/>
</dbReference>
<dbReference type="GO" id="GO:0005737">
    <property type="term" value="C:cytoplasm"/>
    <property type="evidence" value="ECO:0007669"/>
    <property type="project" value="UniProtKB-SubCell"/>
</dbReference>
<dbReference type="GO" id="GO:0008666">
    <property type="term" value="F:2,3,4,5-tetrahydropyridine-2,6-dicarboxylate N-succinyltransferase activity"/>
    <property type="evidence" value="ECO:0007669"/>
    <property type="project" value="UniProtKB-UniRule"/>
</dbReference>
<dbReference type="GO" id="GO:0016779">
    <property type="term" value="F:nucleotidyltransferase activity"/>
    <property type="evidence" value="ECO:0007669"/>
    <property type="project" value="TreeGrafter"/>
</dbReference>
<dbReference type="GO" id="GO:0019877">
    <property type="term" value="P:diaminopimelate biosynthetic process"/>
    <property type="evidence" value="ECO:0007669"/>
    <property type="project" value="UniProtKB-UniRule"/>
</dbReference>
<dbReference type="GO" id="GO:0009089">
    <property type="term" value="P:lysine biosynthetic process via diaminopimelate"/>
    <property type="evidence" value="ECO:0007669"/>
    <property type="project" value="UniProtKB-UniRule"/>
</dbReference>
<dbReference type="CDD" id="cd03350">
    <property type="entry name" value="LbH_THP_succinylT"/>
    <property type="match status" value="1"/>
</dbReference>
<dbReference type="Gene3D" id="2.160.10.10">
    <property type="entry name" value="Hexapeptide repeat proteins"/>
    <property type="match status" value="1"/>
</dbReference>
<dbReference type="Gene3D" id="1.10.166.10">
    <property type="entry name" value="Tetrahydrodipicolinate-N-succinyltransferase, N-terminal domain"/>
    <property type="match status" value="1"/>
</dbReference>
<dbReference type="HAMAP" id="MF_00811">
    <property type="entry name" value="DapD"/>
    <property type="match status" value="1"/>
</dbReference>
<dbReference type="InterPro" id="IPR005664">
    <property type="entry name" value="DapD_Trfase_Hexpep_rpt_fam"/>
</dbReference>
<dbReference type="InterPro" id="IPR001451">
    <property type="entry name" value="Hexapep"/>
</dbReference>
<dbReference type="InterPro" id="IPR018357">
    <property type="entry name" value="Hexapep_transf_CS"/>
</dbReference>
<dbReference type="InterPro" id="IPR023180">
    <property type="entry name" value="THP_succinylTrfase_dom1"/>
</dbReference>
<dbReference type="InterPro" id="IPR037133">
    <property type="entry name" value="THP_succinylTrfase_N_sf"/>
</dbReference>
<dbReference type="InterPro" id="IPR011004">
    <property type="entry name" value="Trimer_LpxA-like_sf"/>
</dbReference>
<dbReference type="NCBIfam" id="TIGR00965">
    <property type="entry name" value="dapD"/>
    <property type="match status" value="1"/>
</dbReference>
<dbReference type="NCBIfam" id="NF008808">
    <property type="entry name" value="PRK11830.1"/>
    <property type="match status" value="1"/>
</dbReference>
<dbReference type="PANTHER" id="PTHR19136:SF52">
    <property type="entry name" value="2,3,4,5-TETRAHYDROPYRIDINE-2,6-DICARBOXYLATE N-SUCCINYLTRANSFERASE"/>
    <property type="match status" value="1"/>
</dbReference>
<dbReference type="PANTHER" id="PTHR19136">
    <property type="entry name" value="MOLYBDENUM COFACTOR GUANYLYLTRANSFERASE"/>
    <property type="match status" value="1"/>
</dbReference>
<dbReference type="Pfam" id="PF14602">
    <property type="entry name" value="Hexapep_2"/>
    <property type="match status" value="1"/>
</dbReference>
<dbReference type="Pfam" id="PF14805">
    <property type="entry name" value="THDPS_N_2"/>
    <property type="match status" value="1"/>
</dbReference>
<dbReference type="SUPFAM" id="SSF51161">
    <property type="entry name" value="Trimeric LpxA-like enzymes"/>
    <property type="match status" value="1"/>
</dbReference>
<dbReference type="PROSITE" id="PS00101">
    <property type="entry name" value="HEXAPEP_TRANSFERASES"/>
    <property type="match status" value="1"/>
</dbReference>
<protein>
    <recommendedName>
        <fullName evidence="1">2,3,4,5-tetrahydropyridine-2,6-dicarboxylate N-succinyltransferase</fullName>
        <ecNumber evidence="1">2.3.1.117</ecNumber>
    </recommendedName>
    <alternativeName>
        <fullName evidence="1">Tetrahydrodipicolinate N-succinyltransferase</fullName>
        <shortName evidence="1">THDP succinyltransferase</shortName>
        <shortName evidence="1">THP succinyltransferase</shortName>
        <shortName evidence="1">Tetrahydropicolinate succinylase</shortName>
    </alternativeName>
</protein>
<feature type="chain" id="PRO_1000047195" description="2,3,4,5-tetrahydropyridine-2,6-dicarboxylate N-succinyltransferase">
    <location>
        <begin position="1"/>
        <end position="285"/>
    </location>
</feature>
<feature type="binding site" evidence="1">
    <location>
        <position position="111"/>
    </location>
    <ligand>
        <name>substrate</name>
    </ligand>
</feature>
<feature type="binding site" evidence="1">
    <location>
        <position position="148"/>
    </location>
    <ligand>
        <name>substrate</name>
    </ligand>
</feature>
<accession>A6U5J9</accession>
<name>DAPD_SINMW</name>
<comment type="catalytic activity">
    <reaction evidence="1">
        <text>(S)-2,3,4,5-tetrahydrodipicolinate + succinyl-CoA + H2O = (S)-2-succinylamino-6-oxoheptanedioate + CoA</text>
        <dbReference type="Rhea" id="RHEA:17325"/>
        <dbReference type="ChEBI" id="CHEBI:15377"/>
        <dbReference type="ChEBI" id="CHEBI:15685"/>
        <dbReference type="ChEBI" id="CHEBI:16845"/>
        <dbReference type="ChEBI" id="CHEBI:57287"/>
        <dbReference type="ChEBI" id="CHEBI:57292"/>
        <dbReference type="EC" id="2.3.1.117"/>
    </reaction>
</comment>
<comment type="pathway">
    <text evidence="1">Amino-acid biosynthesis; L-lysine biosynthesis via DAP pathway; LL-2,6-diaminopimelate from (S)-tetrahydrodipicolinate (succinylase route): step 1/3.</text>
</comment>
<comment type="subunit">
    <text evidence="1">Homotrimer.</text>
</comment>
<comment type="subcellular location">
    <subcellularLocation>
        <location evidence="1">Cytoplasm</location>
    </subcellularLocation>
</comment>
<comment type="similarity">
    <text evidence="1">Belongs to the transferase hexapeptide repeat family.</text>
</comment>
<keyword id="KW-0012">Acyltransferase</keyword>
<keyword id="KW-0028">Amino-acid biosynthesis</keyword>
<keyword id="KW-0963">Cytoplasm</keyword>
<keyword id="KW-0220">Diaminopimelate biosynthesis</keyword>
<keyword id="KW-0457">Lysine biosynthesis</keyword>
<keyword id="KW-0677">Repeat</keyword>
<keyword id="KW-0808">Transferase</keyword>
<gene>
    <name evidence="1" type="primary">dapD</name>
    <name type="ordered locus">Smed_0069</name>
</gene>
<proteinExistence type="inferred from homology"/>
<sequence length="285" mass="30280">MTNHDLASLSQTIETAFENRDAVNTGTRGAVRDAVEAALNLLDSGKVRVAERAADGTWTVNQWLKKAVLLSFRLNPMELVRGGPGEAVWWDKVASKFDGWSVNEFEKAGFRAVPNCVVRRSAYIAPNAVLMPSFVNLGAYVGEGTMVDTWATVGSCAQIGKNVHLSGGVGIGGVLEPMQAGPTIIEDNCFIGARSEVVEGCIVREGSVLGMGVFIGKSTKIVDRATGEVMYGEVPPYSVVVAGSMPSGSAMGNGQPAPNLYCAVIVKRVDEKTRSKTGINELLRD</sequence>
<reference key="1">
    <citation type="submission" date="2007-06" db="EMBL/GenBank/DDBJ databases">
        <title>Complete sequence of Sinorhizobium medicae WSM419 chromosome.</title>
        <authorList>
            <consortium name="US DOE Joint Genome Institute"/>
            <person name="Copeland A."/>
            <person name="Lucas S."/>
            <person name="Lapidus A."/>
            <person name="Barry K."/>
            <person name="Glavina del Rio T."/>
            <person name="Dalin E."/>
            <person name="Tice H."/>
            <person name="Pitluck S."/>
            <person name="Chain P."/>
            <person name="Malfatti S."/>
            <person name="Shin M."/>
            <person name="Vergez L."/>
            <person name="Schmutz J."/>
            <person name="Larimer F."/>
            <person name="Land M."/>
            <person name="Hauser L."/>
            <person name="Kyrpides N."/>
            <person name="Mikhailova N."/>
            <person name="Reeve W.G."/>
            <person name="Richardson P."/>
        </authorList>
    </citation>
    <scope>NUCLEOTIDE SEQUENCE [LARGE SCALE GENOMIC DNA]</scope>
    <source>
        <strain>WSM419</strain>
    </source>
</reference>